<reference key="1">
    <citation type="journal article" date="2001" name="Invest. Ophthalmol. Vis. Sci.">
        <title>Structure, chromosomal location, and tissue-specific expression of the mouse opticin gene.</title>
        <authorList>
            <person name="Takanosu M."/>
            <person name="Boyd T.C."/>
            <person name="Le Goff M."/>
            <person name="Henry S.P."/>
            <person name="Zhang Y."/>
            <person name="Bishop P.N."/>
            <person name="Mayne R."/>
        </authorList>
    </citation>
    <scope>NUCLEOTIDE SEQUENCE [GENOMIC DNA / MRNA]</scope>
    <scope>TISSUE SPECIFICITY</scope>
    <scope>DEVELOPMENTAL STAGE</scope>
    <source>
        <strain>129/SvJ</strain>
    </source>
</reference>
<reference key="2">
    <citation type="journal article" date="2002" name="Hum. Mol. Genet.">
        <title>Protein localization in the human eye and genetic screen of opticin.</title>
        <authorList>
            <person name="Friedman J.S."/>
            <person name="Faucher M."/>
            <person name="Hiscott P."/>
            <person name="Biron V.L."/>
            <person name="Malenfant M."/>
            <person name="Turcotte P."/>
            <person name="Raymond V."/>
            <person name="Walter M.A."/>
        </authorList>
    </citation>
    <scope>NUCLEOTIDE SEQUENCE [MRNA]</scope>
    <source>
        <strain>C57BL/6J</strain>
    </source>
</reference>
<reference key="3">
    <citation type="journal article" date="2012" name="Invest. Ophthalmol. Vis. Sci.">
        <title>The vitreous glycoprotein opticin inhibits preretinal neovascularization.</title>
        <authorList>
            <person name="Le Goff M.M."/>
            <person name="Lu H."/>
            <person name="Ugarte M."/>
            <person name="Henry S."/>
            <person name="Takanosu M."/>
            <person name="Mayne R."/>
            <person name="Bishop P.N."/>
        </authorList>
    </citation>
    <scope>FUNCTION</scope>
    <scope>TISSUE SPECIFICITY</scope>
    <scope>DISRUPTION PHENOTYPE</scope>
</reference>
<reference key="4">
    <citation type="journal article" date="2018" name="Sci. Rep.">
        <title>In vivo effect of opticin deficiency in cartilage in a surgically induced mouse model of osteoarthritis.</title>
        <authorList>
            <person name="Farran A."/>
            <person name="Valverde-Franco G."/>
            <person name="Tio L."/>
            <person name="Lussier B."/>
            <person name="Fahmi H."/>
            <person name="Pelletier J.P."/>
            <person name="Bishop P.N."/>
            <person name="Monfort J."/>
            <person name="Martel-Pelletier J."/>
        </authorList>
    </citation>
    <scope>FUNCTION</scope>
    <scope>TISSUE SPECIFICITY</scope>
    <scope>DISRUPTION PHENOTYPE</scope>
</reference>
<gene>
    <name type="primary">Optc</name>
    <name type="synonym">Opt</name>
</gene>
<accession>Q920A0</accession>
<accession>Q8K3K2</accession>
<accession>Q91ZZ9</accession>
<keyword id="KW-1015">Disulfide bond</keyword>
<keyword id="KW-0272">Extracellular matrix</keyword>
<keyword id="KW-0325">Glycoprotein</keyword>
<keyword id="KW-0433">Leucine-rich repeat</keyword>
<keyword id="KW-1185">Reference proteome</keyword>
<keyword id="KW-0677">Repeat</keyword>
<keyword id="KW-0964">Secreted</keyword>
<keyword id="KW-0732">Signal</keyword>
<keyword id="KW-0765">Sulfation</keyword>
<name>OPT_MOUSE</name>
<protein>
    <recommendedName>
        <fullName>Opticin</fullName>
    </recommendedName>
    <alternativeName>
        <fullName>Oculoglycan</fullName>
    </alternativeName>
</protein>
<organism>
    <name type="scientific">Mus musculus</name>
    <name type="common">Mouse</name>
    <dbReference type="NCBI Taxonomy" id="10090"/>
    <lineage>
        <taxon>Eukaryota</taxon>
        <taxon>Metazoa</taxon>
        <taxon>Chordata</taxon>
        <taxon>Craniata</taxon>
        <taxon>Vertebrata</taxon>
        <taxon>Euteleostomi</taxon>
        <taxon>Mammalia</taxon>
        <taxon>Eutheria</taxon>
        <taxon>Euarchontoglires</taxon>
        <taxon>Glires</taxon>
        <taxon>Rodentia</taxon>
        <taxon>Myomorpha</taxon>
        <taxon>Muroidea</taxon>
        <taxon>Muridae</taxon>
        <taxon>Murinae</taxon>
        <taxon>Mus</taxon>
        <taxon>Mus</taxon>
    </lineage>
</organism>
<feature type="signal peptide" evidence="1">
    <location>
        <begin position="1"/>
        <end position="19"/>
    </location>
</feature>
<feature type="chain" id="PRO_0000032766" description="Opticin">
    <location>
        <begin position="20"/>
        <end position="328"/>
    </location>
</feature>
<feature type="domain" description="LRRNT">
    <location>
        <begin position="112"/>
        <end position="149"/>
    </location>
</feature>
<feature type="repeat" description="LRR 1">
    <location>
        <begin position="150"/>
        <end position="171"/>
    </location>
</feature>
<feature type="repeat" description="LRR 2">
    <location>
        <begin position="174"/>
        <end position="195"/>
    </location>
</feature>
<feature type="repeat" description="LRR 3">
    <location>
        <begin position="198"/>
        <end position="219"/>
    </location>
</feature>
<feature type="repeat" description="LRR 4">
    <location>
        <begin position="244"/>
        <end position="265"/>
    </location>
</feature>
<feature type="repeat" description="LRR 5">
    <location>
        <begin position="266"/>
        <end position="286"/>
    </location>
</feature>
<feature type="repeat" description="LRR 6">
    <location>
        <begin position="296"/>
        <end position="316"/>
    </location>
</feature>
<feature type="site" description="Cleavage; by MMP7" evidence="3">
    <location>
        <begin position="20"/>
        <end position="21"/>
    </location>
</feature>
<feature type="site" description="Cleavage; by MMP7" evidence="3">
    <location>
        <begin position="30"/>
        <end position="31"/>
    </location>
</feature>
<feature type="site" description="Cleavage; by MMP13" evidence="2">
    <location>
        <begin position="111"/>
        <end position="112"/>
    </location>
</feature>
<feature type="modified residue" description="Sulfotyrosine" evidence="4">
    <location>
        <position position="69"/>
    </location>
</feature>
<feature type="glycosylation site" description="N-linked (GlcNAc...) asparagine" evidence="4">
    <location>
        <position position="46"/>
    </location>
</feature>
<feature type="glycosylation site" description="N-linked (GlcNAc...) asparagine" evidence="4">
    <location>
        <position position="80"/>
    </location>
</feature>
<feature type="glycosylation site" description="N-linked (GlcNAc...) asparagine" evidence="4">
    <location>
        <position position="101"/>
    </location>
</feature>
<feature type="glycosylation site" description="N-linked (GlcNAc...) asparagine" evidence="4">
    <location>
        <position position="308"/>
    </location>
</feature>
<feature type="disulfide bond" evidence="1">
    <location>
        <begin position="285"/>
        <end position="318"/>
    </location>
</feature>
<feature type="sequence conflict" description="In Ref. 1; AAL12836/AAL12835." evidence="8" ref="1">
    <original>D</original>
    <variation>Y</variation>
    <location>
        <position position="168"/>
    </location>
</feature>
<feature type="sequence conflict" description="In Ref. 1; AAL12836." evidence="8" ref="1">
    <original>CDT</original>
    <variation>SLS</variation>
    <location>
        <begin position="285"/>
        <end position="287"/>
    </location>
</feature>
<sequence length="328" mass="36422">MKFLAFLSLLSLVLQKAETASLLGEREREEQSPEEGDTYASLYVGNHTLSIEDYNEVIDLSNYEELADYGDQIPEAKISNLTLPTRTSPTSTVAQKTLSPNLTMAVPTTTGLLNSQSSHGLPTCLVCVCLGSSVYCDDADLENIPPLPQMTTYLYARFNHISHIQAGDFKGLTKLRRIDLSGNSISSIHNDALRLLPALQDLILPENQLAALPVLPSGIEFLDVRLNRLQSSGIQPEAFVALKKLQFLYLANNMLDSIPGPLPLSLRSLHLQNNMIETMESDTFCDTGEHRHERRQLEDIRLDGNPINLSLFPEAYFCLPRLPVGHFT</sequence>
<dbReference type="EMBL" id="AF333980">
    <property type="protein sequence ID" value="AAL12835.1"/>
    <property type="molecule type" value="mRNA"/>
</dbReference>
<dbReference type="EMBL" id="AF333981">
    <property type="protein sequence ID" value="AAL12836.1"/>
    <property type="molecule type" value="Genomic_DNA"/>
</dbReference>
<dbReference type="EMBL" id="AY077682">
    <property type="protein sequence ID" value="AAL78287.1"/>
    <property type="molecule type" value="mRNA"/>
</dbReference>
<dbReference type="CCDS" id="CCDS15299.2"/>
<dbReference type="RefSeq" id="NP_001382487.2">
    <property type="nucleotide sequence ID" value="NM_001395558.3"/>
</dbReference>
<dbReference type="RefSeq" id="NP_001410370.1">
    <property type="nucleotide sequence ID" value="NM_001423441.1"/>
</dbReference>
<dbReference type="RefSeq" id="NP_473417.3">
    <property type="nucleotide sequence ID" value="NM_054076.4"/>
</dbReference>
<dbReference type="SMR" id="Q920A0"/>
<dbReference type="FunCoup" id="Q920A0">
    <property type="interactions" value="34"/>
</dbReference>
<dbReference type="STRING" id="10090.ENSMUSP00000120568"/>
<dbReference type="GlyCosmos" id="Q920A0">
    <property type="glycosylation" value="4 sites, No reported glycans"/>
</dbReference>
<dbReference type="GlyGen" id="Q920A0">
    <property type="glycosylation" value="6 sites, 1 N-linked glycan (1 site), 1 O-linked glycan (2 sites)"/>
</dbReference>
<dbReference type="iPTMnet" id="Q920A0"/>
<dbReference type="PhosphoSitePlus" id="Q920A0"/>
<dbReference type="PaxDb" id="10090-ENSMUSP00000120568"/>
<dbReference type="ProteomicsDB" id="294395"/>
<dbReference type="DNASU" id="269120"/>
<dbReference type="Ensembl" id="ENSMUST00000124051.10">
    <property type="protein sequence ID" value="ENSMUSP00000120568.4"/>
    <property type="gene ID" value="ENSMUSG00000010311.16"/>
</dbReference>
<dbReference type="GeneID" id="269120"/>
<dbReference type="KEGG" id="mmu:269120"/>
<dbReference type="AGR" id="MGI:2151113"/>
<dbReference type="CTD" id="26254"/>
<dbReference type="MGI" id="MGI:2151113">
    <property type="gene designation" value="Optc"/>
</dbReference>
<dbReference type="eggNOG" id="KOG0619">
    <property type="taxonomic scope" value="Eukaryota"/>
</dbReference>
<dbReference type="GeneTree" id="ENSGT00940000154248"/>
<dbReference type="InParanoid" id="Q920A0"/>
<dbReference type="OrthoDB" id="676979at2759"/>
<dbReference type="PhylomeDB" id="Q920A0"/>
<dbReference type="Reactome" id="R-MMU-1474228">
    <property type="pathway name" value="Degradation of the extracellular matrix"/>
</dbReference>
<dbReference type="BioGRID-ORCS" id="269120">
    <property type="hits" value="1 hit in 77 CRISPR screens"/>
</dbReference>
<dbReference type="ChiTaRS" id="Itpr1">
    <property type="organism name" value="mouse"/>
</dbReference>
<dbReference type="PRO" id="PR:Q920A0"/>
<dbReference type="Proteomes" id="UP000000589">
    <property type="component" value="Chromosome 1"/>
</dbReference>
<dbReference type="RNAct" id="Q920A0">
    <property type="molecule type" value="protein"/>
</dbReference>
<dbReference type="GO" id="GO:0031012">
    <property type="term" value="C:extracellular matrix"/>
    <property type="evidence" value="ECO:0000314"/>
    <property type="project" value="MGI"/>
</dbReference>
<dbReference type="GO" id="GO:0005576">
    <property type="term" value="C:extracellular region"/>
    <property type="evidence" value="ECO:0007669"/>
    <property type="project" value="UniProtKB-KW"/>
</dbReference>
<dbReference type="GO" id="GO:0001525">
    <property type="term" value="P:angiogenesis"/>
    <property type="evidence" value="ECO:0000315"/>
    <property type="project" value="MGI"/>
</dbReference>
<dbReference type="GO" id="GO:0030199">
    <property type="term" value="P:collagen fibril organization"/>
    <property type="evidence" value="ECO:0000315"/>
    <property type="project" value="UniProtKB"/>
</dbReference>
<dbReference type="GO" id="GO:0016525">
    <property type="term" value="P:negative regulation of angiogenesis"/>
    <property type="evidence" value="ECO:0000315"/>
    <property type="project" value="MGI"/>
</dbReference>
<dbReference type="FunFam" id="3.80.10.10:FF:000167">
    <property type="entry name" value="epiphycan"/>
    <property type="match status" value="1"/>
</dbReference>
<dbReference type="Gene3D" id="3.80.10.10">
    <property type="entry name" value="Ribonuclease Inhibitor"/>
    <property type="match status" value="1"/>
</dbReference>
<dbReference type="InterPro" id="IPR001611">
    <property type="entry name" value="Leu-rich_rpt"/>
</dbReference>
<dbReference type="InterPro" id="IPR003591">
    <property type="entry name" value="Leu-rich_rpt_typical-subtyp"/>
</dbReference>
<dbReference type="InterPro" id="IPR032675">
    <property type="entry name" value="LRR_dom_sf"/>
</dbReference>
<dbReference type="InterPro" id="IPR043547">
    <property type="entry name" value="Mimecan/Epiphycan/Opticin"/>
</dbReference>
<dbReference type="PANTHER" id="PTHR46269">
    <property type="entry name" value="EPIPHYCAN-RELATED"/>
    <property type="match status" value="1"/>
</dbReference>
<dbReference type="PANTHER" id="PTHR46269:SF4">
    <property type="entry name" value="OPTICIN"/>
    <property type="match status" value="1"/>
</dbReference>
<dbReference type="Pfam" id="PF13855">
    <property type="entry name" value="LRR_8"/>
    <property type="match status" value="1"/>
</dbReference>
<dbReference type="SMART" id="SM00369">
    <property type="entry name" value="LRR_TYP"/>
    <property type="match status" value="5"/>
</dbReference>
<dbReference type="SUPFAM" id="SSF52058">
    <property type="entry name" value="L domain-like"/>
    <property type="match status" value="1"/>
</dbReference>
<dbReference type="PROSITE" id="PS51450">
    <property type="entry name" value="LRR"/>
    <property type="match status" value="4"/>
</dbReference>
<evidence type="ECO:0000250" key="1"/>
<evidence type="ECO:0000250" key="2">
    <source>
        <dbReference type="UniProtKB" id="P58874"/>
    </source>
</evidence>
<evidence type="ECO:0000250" key="3">
    <source>
        <dbReference type="UniProtKB" id="Q9UBM4"/>
    </source>
</evidence>
<evidence type="ECO:0000255" key="4"/>
<evidence type="ECO:0000269" key="5">
    <source>
    </source>
</evidence>
<evidence type="ECO:0000269" key="6">
    <source>
    </source>
</evidence>
<evidence type="ECO:0000269" key="7">
    <source>
    </source>
</evidence>
<evidence type="ECO:0000305" key="8"/>
<comment type="function">
    <text evidence="2 6 7">Inhibits angiogenesis in the vitreous humor of the eye, and therefore represses neovascularization (PubMed:22159013). Binds collagen fibrils (By similarity). May be involved in collagen fiber organization via regulation of other members of the small leucine-rich repeat proteoglycan superfamily (PubMed:29323130).</text>
</comment>
<comment type="subunit">
    <text evidence="2">Homodimer.</text>
</comment>
<comment type="subcellular location">
    <subcellularLocation>
        <location evidence="2">Secreted</location>
        <location evidence="2">Extracellular space</location>
        <location evidence="2">Extracellular matrix</location>
    </subcellularLocation>
</comment>
<comment type="tissue specificity">
    <text evidence="5 6 7">Expressed in cartilage (at protein level) (PubMed:29323130). Expressed in the vitreous collagen, inner limiting membrane, lens capsule, trabecular meshwork, anterior surface of the iris, the area adjacent to the nonpigmented ciliary epithelium, and weakly expressed in the retina of the eye (at protein level) (PubMed:22159013). Expressed in the nonpigmented ciliary epithelium of the eye (PubMed:11527931).</text>
</comment>
<comment type="developmental stage">
    <text evidence="5">Expressed in the presumptive ciliary body during development.</text>
</comment>
<comment type="PTM">
    <text evidence="8">O-glycosylated.</text>
</comment>
<comment type="PTM">
    <text evidence="3">Sulfated on tyrosine residues.</text>
</comment>
<comment type="PTM">
    <text evidence="2 3">Proteolytically cleaved by MMP1, MMP2, MMP3, MMP7, MMP8, MMP9, ADAMTS4, and ADAMTS5 (By similarity). Proteolytically cleaved by MMP13 (By similarity).</text>
</comment>
<comment type="disruption phenotype">
    <text evidence="6 7">Increased organization of cartilage collagen fibers featuring more smaller diameter fibers that are closely packed (PubMed:29323130). Dysregulation of small leucine-rich repeat proteoglycan superfamily members in cartilage, including an increase in Lum and Epyc, and a decrease in Fmod and Prelp (PubMed:29323130). In a surgical osteoarthritis model, a reduction in cartilage degradation and inflammatory markers, decreased loss of cartilage integrity, and reduced synovial membrane thickness (PubMed:29323130). Decrease in vitreous body vaso-obliteration upon hypoxia, and an increase in preretinal neovascularization upon restoration of normoxia (PubMed:22159013).</text>
</comment>
<comment type="similarity">
    <text evidence="8">Belongs to the small leucine-rich proteoglycan (SLRP) family. SLRP class III subfamily.</text>
</comment>
<proteinExistence type="evidence at protein level"/>